<evidence type="ECO:0000255" key="1">
    <source>
        <dbReference type="HAMAP-Rule" id="MF_00693"/>
    </source>
</evidence>
<gene>
    <name type="ordered locus">Mmwyl1_2868</name>
</gene>
<feature type="chain" id="PRO_1000083160" description="Probable transcriptional regulatory protein Mmwyl1_2868">
    <location>
        <begin position="1"/>
        <end position="238"/>
    </location>
</feature>
<reference key="1">
    <citation type="submission" date="2007-06" db="EMBL/GenBank/DDBJ databases">
        <title>Complete sequence of Marinomonas sp. MWYL1.</title>
        <authorList>
            <consortium name="US DOE Joint Genome Institute"/>
            <person name="Copeland A."/>
            <person name="Lucas S."/>
            <person name="Lapidus A."/>
            <person name="Barry K."/>
            <person name="Glavina del Rio T."/>
            <person name="Dalin E."/>
            <person name="Tice H."/>
            <person name="Pitluck S."/>
            <person name="Kiss H."/>
            <person name="Brettin T."/>
            <person name="Bruce D."/>
            <person name="Detter J.C."/>
            <person name="Han C."/>
            <person name="Schmutz J."/>
            <person name="Larimer F."/>
            <person name="Land M."/>
            <person name="Hauser L."/>
            <person name="Kyrpides N."/>
            <person name="Kim E."/>
            <person name="Johnston A.W.B."/>
            <person name="Todd J.D."/>
            <person name="Rogers R."/>
            <person name="Wexler M."/>
            <person name="Bond P.L."/>
            <person name="Li Y."/>
            <person name="Richardson P."/>
        </authorList>
    </citation>
    <scope>NUCLEOTIDE SEQUENCE [LARGE SCALE GENOMIC DNA]</scope>
    <source>
        <strain>MWYL1</strain>
    </source>
</reference>
<keyword id="KW-0963">Cytoplasm</keyword>
<keyword id="KW-0238">DNA-binding</keyword>
<keyword id="KW-0804">Transcription</keyword>
<keyword id="KW-0805">Transcription regulation</keyword>
<protein>
    <recommendedName>
        <fullName evidence="1">Probable transcriptional regulatory protein Mmwyl1_2868</fullName>
    </recommendedName>
</protein>
<dbReference type="EMBL" id="CP000749">
    <property type="protein sequence ID" value="ABR71780.1"/>
    <property type="molecule type" value="Genomic_DNA"/>
</dbReference>
<dbReference type="SMR" id="A6VZA1"/>
<dbReference type="STRING" id="400668.Mmwyl1_2868"/>
<dbReference type="KEGG" id="mmw:Mmwyl1_2868"/>
<dbReference type="eggNOG" id="COG0217">
    <property type="taxonomic scope" value="Bacteria"/>
</dbReference>
<dbReference type="HOGENOM" id="CLU_062974_2_0_6"/>
<dbReference type="OrthoDB" id="9781053at2"/>
<dbReference type="GO" id="GO:0005829">
    <property type="term" value="C:cytosol"/>
    <property type="evidence" value="ECO:0007669"/>
    <property type="project" value="TreeGrafter"/>
</dbReference>
<dbReference type="GO" id="GO:0003677">
    <property type="term" value="F:DNA binding"/>
    <property type="evidence" value="ECO:0007669"/>
    <property type="project" value="UniProtKB-UniRule"/>
</dbReference>
<dbReference type="GO" id="GO:0006355">
    <property type="term" value="P:regulation of DNA-templated transcription"/>
    <property type="evidence" value="ECO:0007669"/>
    <property type="project" value="UniProtKB-UniRule"/>
</dbReference>
<dbReference type="FunFam" id="1.10.10.200:FF:000003">
    <property type="entry name" value="Probable transcriptional regulatory protein YeeN"/>
    <property type="match status" value="1"/>
</dbReference>
<dbReference type="Gene3D" id="1.10.10.200">
    <property type="match status" value="1"/>
</dbReference>
<dbReference type="Gene3D" id="3.30.70.980">
    <property type="match status" value="2"/>
</dbReference>
<dbReference type="HAMAP" id="MF_00693">
    <property type="entry name" value="Transcrip_reg_TACO1"/>
    <property type="match status" value="1"/>
</dbReference>
<dbReference type="InterPro" id="IPR017856">
    <property type="entry name" value="Integrase-like_N"/>
</dbReference>
<dbReference type="InterPro" id="IPR048300">
    <property type="entry name" value="TACO1_YebC-like_2nd/3rd_dom"/>
</dbReference>
<dbReference type="InterPro" id="IPR049083">
    <property type="entry name" value="TACO1_YebC_N"/>
</dbReference>
<dbReference type="InterPro" id="IPR002876">
    <property type="entry name" value="Transcrip_reg_TACO1-like"/>
</dbReference>
<dbReference type="InterPro" id="IPR026564">
    <property type="entry name" value="Transcrip_reg_TACO1-like_dom3"/>
</dbReference>
<dbReference type="InterPro" id="IPR029072">
    <property type="entry name" value="YebC-like"/>
</dbReference>
<dbReference type="NCBIfam" id="NF009044">
    <property type="entry name" value="PRK12378.1"/>
    <property type="match status" value="1"/>
</dbReference>
<dbReference type="PANTHER" id="PTHR12532">
    <property type="entry name" value="TRANSLATIONAL ACTIVATOR OF CYTOCHROME C OXIDASE 1"/>
    <property type="match status" value="1"/>
</dbReference>
<dbReference type="PANTHER" id="PTHR12532:SF0">
    <property type="entry name" value="TRANSLATIONAL ACTIVATOR OF CYTOCHROME C OXIDASE 1"/>
    <property type="match status" value="1"/>
</dbReference>
<dbReference type="Pfam" id="PF20772">
    <property type="entry name" value="TACO1_YebC_N"/>
    <property type="match status" value="1"/>
</dbReference>
<dbReference type="Pfam" id="PF01709">
    <property type="entry name" value="Transcrip_reg"/>
    <property type="match status" value="1"/>
</dbReference>
<dbReference type="SUPFAM" id="SSF75625">
    <property type="entry name" value="YebC-like"/>
    <property type="match status" value="1"/>
</dbReference>
<organism>
    <name type="scientific">Marinomonas sp. (strain MWYL1)</name>
    <dbReference type="NCBI Taxonomy" id="400668"/>
    <lineage>
        <taxon>Bacteria</taxon>
        <taxon>Pseudomonadati</taxon>
        <taxon>Pseudomonadota</taxon>
        <taxon>Gammaproteobacteria</taxon>
        <taxon>Oceanospirillales</taxon>
        <taxon>Oceanospirillaceae</taxon>
        <taxon>Marinomonas</taxon>
    </lineage>
</organism>
<proteinExistence type="inferred from homology"/>
<sequence>MGRAFQNRKESMAKTSDQKAKVYSKYGREIYVCAKSGGIDPNGNLALRSLIDRAKKDQVPTHVIDKAIDKAKGGGGEDFDTARYEGFGPGNTMVIVDCLSDNPNRTFGDVRTCFNKVKCKIGSQGSVSHMFDHSAIFVFAGTDEEAVLEALMMADVDVTDIELEDGKVTVFAPHTDYSKAKTALTDAFGEIEFEVDEIQFVAQNTTEIQGEEVEQFDRFLDLLNDLDDVQRVYHNAEY</sequence>
<comment type="subcellular location">
    <subcellularLocation>
        <location evidence="1">Cytoplasm</location>
    </subcellularLocation>
</comment>
<comment type="similarity">
    <text evidence="1">Belongs to the TACO1 family.</text>
</comment>
<accession>A6VZA1</accession>
<name>Y2868_MARMS</name>